<gene>
    <name type="primary">RPL17</name>
</gene>
<comment type="function">
    <text evidence="1">Component of the large ribosomal subunit. The ribosome is a large ribonucleoprotein complex responsible for the synthesis of proteins in the cell.</text>
</comment>
<comment type="subunit">
    <text evidence="1">Component of the large ribosomal subunit.</text>
</comment>
<comment type="subcellular location">
    <subcellularLocation>
        <location evidence="1">Cytoplasm</location>
    </subcellularLocation>
</comment>
<comment type="similarity">
    <text evidence="3">Belongs to the universal ribosomal protein uL22 family.</text>
</comment>
<reference key="1">
    <citation type="submission" date="2004-08" db="EMBL/GenBank/DDBJ databases">
        <authorList>
            <person name="Pathak S."/>
            <person name="Pisipati S."/>
            <person name="Kapil S."/>
        </authorList>
    </citation>
    <scope>NUCLEOTIDE SEQUENCE [MRNA]</scope>
</reference>
<proteinExistence type="evidence at transcript level"/>
<accession>Q5XTY7</accession>
<name>RL17_FELCA</name>
<sequence length="184" mass="21397">MVRYSLDPENPTKSCKSRGSNLRVHFKNTRETAQAIKGMHIRKATKYLKDVTLQKQCVPFRRYNGGVGRCAQAKQWGWTQGRWPKKSAEFLLHMLKNAESNAELKGLDVDSLVIEHIQVNKAPKMRRRTYRAHGRINPYMSSPCHIEMILTEKEQIVPKPEEEVAQKKKISQKKLKKQKLMARE</sequence>
<dbReference type="EMBL" id="AY738264">
    <property type="protein sequence ID" value="AAU87901.1"/>
    <property type="molecule type" value="mRNA"/>
</dbReference>
<dbReference type="RefSeq" id="NP_001122314.1">
    <property type="nucleotide sequence ID" value="NM_001128842.1"/>
</dbReference>
<dbReference type="SMR" id="Q5XTY7"/>
<dbReference type="STRING" id="9685.ENSFCAP00000024362"/>
<dbReference type="PaxDb" id="9685-ENSFCAP00000024362"/>
<dbReference type="GeneID" id="100169966"/>
<dbReference type="KEGG" id="fca:100169966"/>
<dbReference type="CTD" id="6139"/>
<dbReference type="eggNOG" id="KOG3353">
    <property type="taxonomic scope" value="Eukaryota"/>
</dbReference>
<dbReference type="HOGENOM" id="CLU_083987_0_1_1"/>
<dbReference type="InParanoid" id="Q5XTY7"/>
<dbReference type="OrthoDB" id="10017723at2759"/>
<dbReference type="Proteomes" id="UP000011712">
    <property type="component" value="Unplaced"/>
</dbReference>
<dbReference type="GO" id="GO:0022625">
    <property type="term" value="C:cytosolic large ribosomal subunit"/>
    <property type="evidence" value="ECO:0000318"/>
    <property type="project" value="GO_Central"/>
</dbReference>
<dbReference type="GO" id="GO:0003735">
    <property type="term" value="F:structural constituent of ribosome"/>
    <property type="evidence" value="ECO:0000318"/>
    <property type="project" value="GO_Central"/>
</dbReference>
<dbReference type="GO" id="GO:0002181">
    <property type="term" value="P:cytoplasmic translation"/>
    <property type="evidence" value="ECO:0000318"/>
    <property type="project" value="GO_Central"/>
</dbReference>
<dbReference type="CDD" id="cd00336">
    <property type="entry name" value="Ribosomal_L22"/>
    <property type="match status" value="1"/>
</dbReference>
<dbReference type="FunFam" id="3.90.470.10:FF:000003">
    <property type="entry name" value="60S ribosomal protein L17"/>
    <property type="match status" value="1"/>
</dbReference>
<dbReference type="Gene3D" id="3.90.470.10">
    <property type="entry name" value="Ribosomal protein L22/L17"/>
    <property type="match status" value="1"/>
</dbReference>
<dbReference type="HAMAP" id="MF_01331_A">
    <property type="entry name" value="Ribosomal_uL22_A"/>
    <property type="match status" value="1"/>
</dbReference>
<dbReference type="InterPro" id="IPR001063">
    <property type="entry name" value="Ribosomal_uL22"/>
</dbReference>
<dbReference type="InterPro" id="IPR018260">
    <property type="entry name" value="Ribosomal_uL22_CS"/>
</dbReference>
<dbReference type="InterPro" id="IPR005721">
    <property type="entry name" value="Ribosomal_uL22_euk/arc"/>
</dbReference>
<dbReference type="InterPro" id="IPR036394">
    <property type="entry name" value="Ribosomal_uL22_sf"/>
</dbReference>
<dbReference type="NCBIfam" id="NF003260">
    <property type="entry name" value="PRK04223.1"/>
    <property type="match status" value="1"/>
</dbReference>
<dbReference type="NCBIfam" id="TIGR01038">
    <property type="entry name" value="uL22_arch_euk"/>
    <property type="match status" value="1"/>
</dbReference>
<dbReference type="PANTHER" id="PTHR11593">
    <property type="entry name" value="60S RIBOSOMAL PROTEIN L17"/>
    <property type="match status" value="1"/>
</dbReference>
<dbReference type="PANTHER" id="PTHR11593:SF11">
    <property type="entry name" value="LARGE RIBOSOMAL SUBUNIT PROTEIN UL22"/>
    <property type="match status" value="1"/>
</dbReference>
<dbReference type="Pfam" id="PF00237">
    <property type="entry name" value="Ribosomal_L22"/>
    <property type="match status" value="1"/>
</dbReference>
<dbReference type="SUPFAM" id="SSF54843">
    <property type="entry name" value="Ribosomal protein L22"/>
    <property type="match status" value="1"/>
</dbReference>
<dbReference type="PROSITE" id="PS00464">
    <property type="entry name" value="RIBOSOMAL_L22"/>
    <property type="match status" value="1"/>
</dbReference>
<keyword id="KW-0963">Cytoplasm</keyword>
<keyword id="KW-1185">Reference proteome</keyword>
<keyword id="KW-0687">Ribonucleoprotein</keyword>
<keyword id="KW-0689">Ribosomal protein</keyword>
<organism>
    <name type="scientific">Felis catus</name>
    <name type="common">Cat</name>
    <name type="synonym">Felis silvestris catus</name>
    <dbReference type="NCBI Taxonomy" id="9685"/>
    <lineage>
        <taxon>Eukaryota</taxon>
        <taxon>Metazoa</taxon>
        <taxon>Chordata</taxon>
        <taxon>Craniata</taxon>
        <taxon>Vertebrata</taxon>
        <taxon>Euteleostomi</taxon>
        <taxon>Mammalia</taxon>
        <taxon>Eutheria</taxon>
        <taxon>Laurasiatheria</taxon>
        <taxon>Carnivora</taxon>
        <taxon>Feliformia</taxon>
        <taxon>Felidae</taxon>
        <taxon>Felinae</taxon>
        <taxon>Felis</taxon>
    </lineage>
</organism>
<evidence type="ECO:0000250" key="1">
    <source>
        <dbReference type="UniProtKB" id="P18621"/>
    </source>
</evidence>
<evidence type="ECO:0000256" key="2">
    <source>
        <dbReference type="SAM" id="MobiDB-lite"/>
    </source>
</evidence>
<evidence type="ECO:0000305" key="3"/>
<protein>
    <recommendedName>
        <fullName evidence="3">Large ribosomal subunit protein uL22</fullName>
    </recommendedName>
    <alternativeName>
        <fullName>60S ribosomal protein L17</fullName>
    </alternativeName>
</protein>
<feature type="chain" id="PRO_0000125332" description="Large ribosomal subunit protein uL22">
    <location>
        <begin position="1"/>
        <end position="184"/>
    </location>
</feature>
<feature type="region of interest" description="Disordered" evidence="2">
    <location>
        <begin position="160"/>
        <end position="184"/>
    </location>
</feature>
<feature type="compositionally biased region" description="Basic residues" evidence="2">
    <location>
        <begin position="167"/>
        <end position="184"/>
    </location>
</feature>